<reference key="1">
    <citation type="journal article" date="2002" name="Planta">
        <title>Family business: the multidrug-resistance related protein (MRP) ABC transporter genes in Arabidopsis thaliana.</title>
        <authorList>
            <person name="Kolukisaoglu U.H."/>
            <person name="Bovet L."/>
            <person name="Klein M."/>
            <person name="Eggmann T."/>
            <person name="Geisler M."/>
            <person name="Wanke D."/>
            <person name="Martinoia E."/>
            <person name="Schulz B."/>
        </authorList>
    </citation>
    <scope>NUCLEOTIDE SEQUENCE [MRNA]</scope>
    <scope>TISSUE SPECIFICITY</scope>
    <scope>INDUCTION</scope>
</reference>
<reference key="2">
    <citation type="journal article" date="2000" name="DNA Res.">
        <title>Structural analysis of Arabidopsis thaliana chromosome 3. II. Sequence features of the 4,251,695 bp regions covered by 90 P1, TAC and BAC clones.</title>
        <authorList>
            <person name="Kaneko T."/>
            <person name="Katoh T."/>
            <person name="Sato S."/>
            <person name="Nakamura Y."/>
            <person name="Asamizu E."/>
            <person name="Tabata S."/>
        </authorList>
    </citation>
    <scope>NUCLEOTIDE SEQUENCE [LARGE SCALE GENOMIC DNA]</scope>
    <source>
        <strain>cv. Columbia</strain>
    </source>
</reference>
<reference key="3">
    <citation type="journal article" date="2017" name="Plant J.">
        <title>Araport11: a complete reannotation of the Arabidopsis thaliana reference genome.</title>
        <authorList>
            <person name="Cheng C.Y."/>
            <person name="Krishnakumar V."/>
            <person name="Chan A.P."/>
            <person name="Thibaud-Nissen F."/>
            <person name="Schobel S."/>
            <person name="Town C.D."/>
        </authorList>
    </citation>
    <scope>GENOME REANNOTATION</scope>
    <source>
        <strain>cv. Columbia</strain>
    </source>
</reference>
<reference key="4">
    <citation type="journal article" date="2001" name="J. Biol. Chem.">
        <title>The Arabidopsis thaliana ABC protein superfamily, a complete inventory.</title>
        <authorList>
            <person name="Sanchez-Fernandez R."/>
            <person name="Davies T.G."/>
            <person name="Coleman J.O."/>
            <person name="Rea P.A."/>
        </authorList>
    </citation>
    <scope>GENE FAMILY</scope>
    <scope>NOMENCLATURE</scope>
</reference>
<reference key="5">
    <citation type="journal article" date="2002" name="Planta">
        <title>Multifunctionality of plant ABC transporters -- more than just detoxifiers.</title>
        <authorList>
            <person name="Martinoia E."/>
            <person name="Klein M."/>
            <person name="Geisler M."/>
            <person name="Bovet L."/>
            <person name="Forestier C."/>
            <person name="Kolukisaoglu H.U."/>
            <person name="Mueller-Roeber B."/>
            <person name="Schulz B."/>
        </authorList>
    </citation>
    <scope>GENE FAMILY</scope>
</reference>
<reference key="6">
    <citation type="journal article" date="2008" name="Trends Plant Sci.">
        <title>Plant ABC proteins - a unified nomenclature and updated inventory.</title>
        <authorList>
            <person name="Verrier P.J."/>
            <person name="Bird D."/>
            <person name="Burla B."/>
            <person name="Dassa E."/>
            <person name="Forestier C."/>
            <person name="Geisler M."/>
            <person name="Klein M."/>
            <person name="Kolukisaoglu H.U."/>
            <person name="Lee Y."/>
            <person name="Martinoia E."/>
            <person name="Murphy A."/>
            <person name="Rea P.A."/>
            <person name="Samuels L."/>
            <person name="Schulz B."/>
            <person name="Spalding E.J."/>
            <person name="Yazaki K."/>
            <person name="Theodoulou F.L."/>
        </authorList>
    </citation>
    <scope>GENE FAMILY</scope>
    <scope>NOMENCLATURE</scope>
</reference>
<reference key="7">
    <citation type="journal article" date="2009" name="J. Proteomics">
        <title>Phosphoproteomic analysis of nuclei-enriched fractions from Arabidopsis thaliana.</title>
        <authorList>
            <person name="Jones A.M.E."/>
            <person name="MacLean D."/>
            <person name="Studholme D.J."/>
            <person name="Serna-Sanz A."/>
            <person name="Andreasson E."/>
            <person name="Rathjen J.P."/>
            <person name="Peck S.C."/>
        </authorList>
    </citation>
    <scope>PHOSPHORYLATION [LARGE SCALE ANALYSIS] AT SER-888</scope>
    <scope>IDENTIFICATION BY MASS SPECTROMETRY [LARGE SCALE ANALYSIS]</scope>
    <source>
        <strain>cv. Columbia</strain>
    </source>
</reference>
<proteinExistence type="evidence at protein level"/>
<dbReference type="EC" id="7.6.2.2"/>
<dbReference type="EMBL" id="AJ507129">
    <property type="protein sequence ID" value="CAD45086.1"/>
    <property type="molecule type" value="mRNA"/>
</dbReference>
<dbReference type="EMBL" id="AP000375">
    <property type="protein sequence ID" value="BAB01401.1"/>
    <property type="molecule type" value="Genomic_DNA"/>
</dbReference>
<dbReference type="EMBL" id="CP002686">
    <property type="protein sequence ID" value="AEE75296.1"/>
    <property type="molecule type" value="Genomic_DNA"/>
</dbReference>
<dbReference type="RefSeq" id="NP_187917.3">
    <property type="nucleotide sequence ID" value="NM_112149.4"/>
</dbReference>
<dbReference type="SMR" id="Q9LK62"/>
<dbReference type="STRING" id="3702.Q9LK62"/>
<dbReference type="iPTMnet" id="Q9LK62"/>
<dbReference type="PaxDb" id="3702-AT3G13100.1"/>
<dbReference type="ProteomicsDB" id="245082"/>
<dbReference type="EnsemblPlants" id="AT3G13100.1">
    <property type="protein sequence ID" value="AT3G13100.1"/>
    <property type="gene ID" value="AT3G13100"/>
</dbReference>
<dbReference type="GeneID" id="820498"/>
<dbReference type="Gramene" id="AT3G13100.1">
    <property type="protein sequence ID" value="AT3G13100.1"/>
    <property type="gene ID" value="AT3G13100"/>
</dbReference>
<dbReference type="KEGG" id="ath:AT3G13100"/>
<dbReference type="Araport" id="AT3G13100"/>
<dbReference type="TAIR" id="AT3G13100">
    <property type="gene designation" value="ABCC7"/>
</dbReference>
<dbReference type="eggNOG" id="KOG0054">
    <property type="taxonomic scope" value="Eukaryota"/>
</dbReference>
<dbReference type="HOGENOM" id="CLU_000604_27_0_1"/>
<dbReference type="InParanoid" id="Q9LK62"/>
<dbReference type="PhylomeDB" id="Q9LK62"/>
<dbReference type="BioCyc" id="ARA:AT3G13100-MONOMER"/>
<dbReference type="PRO" id="PR:Q9LK62"/>
<dbReference type="Proteomes" id="UP000006548">
    <property type="component" value="Chromosome 3"/>
</dbReference>
<dbReference type="ExpressionAtlas" id="Q9LK62">
    <property type="expression patterns" value="baseline and differential"/>
</dbReference>
<dbReference type="GO" id="GO:0016020">
    <property type="term" value="C:membrane"/>
    <property type="evidence" value="ECO:0007669"/>
    <property type="project" value="UniProtKB-SubCell"/>
</dbReference>
<dbReference type="GO" id="GO:0000325">
    <property type="term" value="C:plant-type vacuole"/>
    <property type="evidence" value="ECO:0007005"/>
    <property type="project" value="TAIR"/>
</dbReference>
<dbReference type="GO" id="GO:0008559">
    <property type="term" value="F:ABC-type xenobiotic transporter activity"/>
    <property type="evidence" value="ECO:0007669"/>
    <property type="project" value="UniProtKB-EC"/>
</dbReference>
<dbReference type="GO" id="GO:0005524">
    <property type="term" value="F:ATP binding"/>
    <property type="evidence" value="ECO:0007669"/>
    <property type="project" value="UniProtKB-KW"/>
</dbReference>
<dbReference type="GO" id="GO:0016887">
    <property type="term" value="F:ATP hydrolysis activity"/>
    <property type="evidence" value="ECO:0007669"/>
    <property type="project" value="InterPro"/>
</dbReference>
<dbReference type="GO" id="GO:0042626">
    <property type="term" value="F:ATPase-coupled transmembrane transporter activity"/>
    <property type="evidence" value="ECO:0000250"/>
    <property type="project" value="TAIR"/>
</dbReference>
<dbReference type="GO" id="GO:0051707">
    <property type="term" value="P:response to other organism"/>
    <property type="evidence" value="ECO:0000270"/>
    <property type="project" value="TAIR"/>
</dbReference>
<dbReference type="CDD" id="cd18579">
    <property type="entry name" value="ABC_6TM_ABCC_D1"/>
    <property type="match status" value="1"/>
</dbReference>
<dbReference type="CDD" id="cd18580">
    <property type="entry name" value="ABC_6TM_ABCC_D2"/>
    <property type="match status" value="1"/>
</dbReference>
<dbReference type="CDD" id="cd03250">
    <property type="entry name" value="ABCC_MRP_domain1"/>
    <property type="match status" value="1"/>
</dbReference>
<dbReference type="CDD" id="cd03244">
    <property type="entry name" value="ABCC_MRP_domain2"/>
    <property type="match status" value="1"/>
</dbReference>
<dbReference type="FunFam" id="1.20.1560.10:FF:000003">
    <property type="entry name" value="ABC transporter C family member 10"/>
    <property type="match status" value="1"/>
</dbReference>
<dbReference type="FunFam" id="3.40.50.300:FF:000169">
    <property type="entry name" value="ABC transporter C family member 3"/>
    <property type="match status" value="1"/>
</dbReference>
<dbReference type="FunFam" id="1.20.1560.10:FF:000002">
    <property type="entry name" value="ABC transporter C family member 5"/>
    <property type="match status" value="1"/>
</dbReference>
<dbReference type="FunFam" id="3.40.50.300:FF:000508">
    <property type="entry name" value="ABC transporter C family member 5"/>
    <property type="match status" value="1"/>
</dbReference>
<dbReference type="Gene3D" id="1.20.1560.10">
    <property type="entry name" value="ABC transporter type 1, transmembrane domain"/>
    <property type="match status" value="2"/>
</dbReference>
<dbReference type="Gene3D" id="3.40.50.300">
    <property type="entry name" value="P-loop containing nucleotide triphosphate hydrolases"/>
    <property type="match status" value="2"/>
</dbReference>
<dbReference type="InterPro" id="IPR003593">
    <property type="entry name" value="AAA+_ATPase"/>
</dbReference>
<dbReference type="InterPro" id="IPR011527">
    <property type="entry name" value="ABC1_TM_dom"/>
</dbReference>
<dbReference type="InterPro" id="IPR036640">
    <property type="entry name" value="ABC1_TM_sf"/>
</dbReference>
<dbReference type="InterPro" id="IPR003439">
    <property type="entry name" value="ABC_transporter-like_ATP-bd"/>
</dbReference>
<dbReference type="InterPro" id="IPR017871">
    <property type="entry name" value="ABC_transporter-like_CS"/>
</dbReference>
<dbReference type="InterPro" id="IPR050173">
    <property type="entry name" value="ABC_transporter_C-like"/>
</dbReference>
<dbReference type="InterPro" id="IPR044746">
    <property type="entry name" value="ABCC_6TM_D1"/>
</dbReference>
<dbReference type="InterPro" id="IPR044726">
    <property type="entry name" value="ABCC_6TM_D2"/>
</dbReference>
<dbReference type="InterPro" id="IPR027417">
    <property type="entry name" value="P-loop_NTPase"/>
</dbReference>
<dbReference type="PANTHER" id="PTHR24223:SF387">
    <property type="entry name" value="ABC TRANSPORTER C FAMILY MEMBER 7"/>
    <property type="match status" value="1"/>
</dbReference>
<dbReference type="PANTHER" id="PTHR24223">
    <property type="entry name" value="ATP-BINDING CASSETTE SUB-FAMILY C"/>
    <property type="match status" value="1"/>
</dbReference>
<dbReference type="Pfam" id="PF00664">
    <property type="entry name" value="ABC_membrane"/>
    <property type="match status" value="2"/>
</dbReference>
<dbReference type="Pfam" id="PF00005">
    <property type="entry name" value="ABC_tran"/>
    <property type="match status" value="2"/>
</dbReference>
<dbReference type="SMART" id="SM00382">
    <property type="entry name" value="AAA"/>
    <property type="match status" value="2"/>
</dbReference>
<dbReference type="SUPFAM" id="SSF90123">
    <property type="entry name" value="ABC transporter transmembrane region"/>
    <property type="match status" value="2"/>
</dbReference>
<dbReference type="SUPFAM" id="SSF52540">
    <property type="entry name" value="P-loop containing nucleoside triphosphate hydrolases"/>
    <property type="match status" value="2"/>
</dbReference>
<dbReference type="PROSITE" id="PS50929">
    <property type="entry name" value="ABC_TM1F"/>
    <property type="match status" value="2"/>
</dbReference>
<dbReference type="PROSITE" id="PS00211">
    <property type="entry name" value="ABC_TRANSPORTER_1"/>
    <property type="match status" value="1"/>
</dbReference>
<dbReference type="PROSITE" id="PS50893">
    <property type="entry name" value="ABC_TRANSPORTER_2"/>
    <property type="match status" value="2"/>
</dbReference>
<comment type="function">
    <text evidence="1">Pump for glutathione S-conjugates.</text>
</comment>
<comment type="catalytic activity">
    <reaction>
        <text>ATP + H2O + xenobioticSide 1 = ADP + phosphate + xenobioticSide 2.</text>
        <dbReference type="EC" id="7.6.2.2"/>
    </reaction>
</comment>
<comment type="subcellular location">
    <subcellularLocation>
        <location evidence="3">Membrane</location>
        <topology evidence="3">Multi-pass membrane protein</topology>
    </subcellularLocation>
</comment>
<comment type="tissue specificity">
    <text evidence="5">Ubiquitous.</text>
</comment>
<comment type="induction">
    <text evidence="5">By salicylic acid (SA).</text>
</comment>
<comment type="similarity">
    <text evidence="6">Belongs to the ABC transporter superfamily. ABCC family. Conjugate transporter (TC 3.A.1.208) subfamily.</text>
</comment>
<feature type="chain" id="PRO_0000226078" description="ABC transporter C family member 7">
    <location>
        <begin position="1"/>
        <end position="1493"/>
    </location>
</feature>
<feature type="transmembrane region" description="Helical" evidence="3">
    <location>
        <begin position="21"/>
        <end position="41"/>
    </location>
</feature>
<feature type="transmembrane region" description="Helical" evidence="3">
    <location>
        <begin position="70"/>
        <end position="90"/>
    </location>
</feature>
<feature type="transmembrane region" description="Helical" evidence="3">
    <location>
        <begin position="102"/>
        <end position="122"/>
    </location>
</feature>
<feature type="transmembrane region" description="Helical" evidence="3">
    <location>
        <begin position="140"/>
        <end position="160"/>
    </location>
</feature>
<feature type="transmembrane region" description="Helical" evidence="3">
    <location>
        <begin position="165"/>
        <end position="185"/>
    </location>
</feature>
<feature type="transmembrane region" description="Helical" evidence="3">
    <location>
        <begin position="309"/>
        <end position="329"/>
    </location>
</feature>
<feature type="transmembrane region" description="Helical" evidence="3">
    <location>
        <begin position="343"/>
        <end position="360"/>
    </location>
</feature>
<feature type="transmembrane region" description="Helical" evidence="3">
    <location>
        <begin position="423"/>
        <end position="443"/>
    </location>
</feature>
<feature type="transmembrane region" description="Helical" evidence="3">
    <location>
        <begin position="448"/>
        <end position="468"/>
    </location>
</feature>
<feature type="transmembrane region" description="Helical" evidence="3">
    <location>
        <begin position="535"/>
        <end position="555"/>
    </location>
</feature>
<feature type="transmembrane region" description="Helical" evidence="3">
    <location>
        <begin position="915"/>
        <end position="935"/>
    </location>
</feature>
<feature type="transmembrane region" description="Helical" evidence="3">
    <location>
        <begin position="959"/>
        <end position="979"/>
    </location>
</feature>
<feature type="transmembrane region" description="Helical" evidence="3">
    <location>
        <begin position="1038"/>
        <end position="1055"/>
    </location>
</feature>
<feature type="transmembrane region" description="Helical" evidence="3">
    <location>
        <begin position="1059"/>
        <end position="1081"/>
    </location>
</feature>
<feature type="transmembrane region" description="Helical" evidence="3">
    <location>
        <begin position="1153"/>
        <end position="1173"/>
    </location>
</feature>
<feature type="transmembrane region" description="Helical" evidence="3">
    <location>
        <begin position="1177"/>
        <end position="1197"/>
    </location>
</feature>
<feature type="domain" description="ABC transmembrane type-1 1" evidence="3">
    <location>
        <begin position="309"/>
        <end position="590"/>
    </location>
</feature>
<feature type="domain" description="ABC transporter 1" evidence="2">
    <location>
        <begin position="624"/>
        <end position="847"/>
    </location>
</feature>
<feature type="domain" description="ABC transmembrane type-1 2" evidence="3">
    <location>
        <begin position="922"/>
        <end position="1204"/>
    </location>
</feature>
<feature type="domain" description="ABC transporter 2" evidence="2">
    <location>
        <begin position="1241"/>
        <end position="1475"/>
    </location>
</feature>
<feature type="region of interest" description="Disordered" evidence="4">
    <location>
        <begin position="863"/>
        <end position="898"/>
    </location>
</feature>
<feature type="binding site" evidence="2">
    <location>
        <begin position="659"/>
        <end position="666"/>
    </location>
    <ligand>
        <name>ATP</name>
        <dbReference type="ChEBI" id="CHEBI:30616"/>
        <label>1</label>
    </ligand>
</feature>
<feature type="binding site" evidence="2">
    <location>
        <begin position="1275"/>
        <end position="1282"/>
    </location>
    <ligand>
        <name>ATP</name>
        <dbReference type="ChEBI" id="CHEBI:30616"/>
        <label>2</label>
    </ligand>
</feature>
<feature type="modified residue" description="Phosphoserine" evidence="7">
    <location>
        <position position="888"/>
    </location>
</feature>
<feature type="sequence conflict" description="In Ref. 1; CAD45086." evidence="6" ref="1">
    <original>L</original>
    <variation>V</variation>
    <location>
        <position position="32"/>
    </location>
</feature>
<feature type="sequence conflict" description="In Ref. 1; CAD45086." evidence="6" ref="1">
    <original>K</original>
    <variation>N</variation>
    <location>
        <position position="507"/>
    </location>
</feature>
<feature type="sequence conflict" description="In Ref. 1; CAD45086." evidence="6" ref="1">
    <original>S</original>
    <variation>A</variation>
    <location>
        <position position="950"/>
    </location>
</feature>
<keyword id="KW-0067">ATP-binding</keyword>
<keyword id="KW-0472">Membrane</keyword>
<keyword id="KW-0547">Nucleotide-binding</keyword>
<keyword id="KW-0597">Phosphoprotein</keyword>
<keyword id="KW-1185">Reference proteome</keyword>
<keyword id="KW-0677">Repeat</keyword>
<keyword id="KW-1278">Translocase</keyword>
<keyword id="KW-0812">Transmembrane</keyword>
<keyword id="KW-1133">Transmembrane helix</keyword>
<keyword id="KW-0813">Transport</keyword>
<gene>
    <name type="primary">ABCC7</name>
    <name type="synonym">MRP7</name>
    <name type="ordered locus">At3g13100</name>
    <name type="ORF">MJG19.5</name>
</gene>
<evidence type="ECO:0000250" key="1"/>
<evidence type="ECO:0000255" key="2">
    <source>
        <dbReference type="PROSITE-ProRule" id="PRU00434"/>
    </source>
</evidence>
<evidence type="ECO:0000255" key="3">
    <source>
        <dbReference type="PROSITE-ProRule" id="PRU00441"/>
    </source>
</evidence>
<evidence type="ECO:0000256" key="4">
    <source>
        <dbReference type="SAM" id="MobiDB-lite"/>
    </source>
</evidence>
<evidence type="ECO:0000269" key="5">
    <source>
    </source>
</evidence>
<evidence type="ECO:0000305" key="6"/>
<evidence type="ECO:0007744" key="7">
    <source>
    </source>
</evidence>
<protein>
    <recommendedName>
        <fullName>ABC transporter C family member 7</fullName>
        <shortName>ABC transporter ABCC.7</shortName>
        <shortName>AtABCC7</shortName>
        <ecNumber>7.6.2.2</ecNumber>
    </recommendedName>
    <alternativeName>
        <fullName>ATP-energized glutathione S-conjugate pump 7</fullName>
    </alternativeName>
    <alternativeName>
        <fullName>Glutathione S-conjugate-transporting ATPase 7</fullName>
    </alternativeName>
    <alternativeName>
        <fullName>Multidrug resistance-associated protein 7</fullName>
    </alternativeName>
</protein>
<organism>
    <name type="scientific">Arabidopsis thaliana</name>
    <name type="common">Mouse-ear cress</name>
    <dbReference type="NCBI Taxonomy" id="3702"/>
    <lineage>
        <taxon>Eukaryota</taxon>
        <taxon>Viridiplantae</taxon>
        <taxon>Streptophyta</taxon>
        <taxon>Embryophyta</taxon>
        <taxon>Tracheophyta</taxon>
        <taxon>Spermatophyta</taxon>
        <taxon>Magnoliopsida</taxon>
        <taxon>eudicotyledons</taxon>
        <taxon>Gunneridae</taxon>
        <taxon>Pentapetalae</taxon>
        <taxon>rosids</taxon>
        <taxon>malvids</taxon>
        <taxon>Brassicales</taxon>
        <taxon>Brassicaceae</taxon>
        <taxon>Camelineae</taxon>
        <taxon>Arabidopsis</taxon>
    </lineage>
</organism>
<name>AB7C_ARATH</name>
<accession>Q9LK62</accession>
<accession>Q8LGU0</accession>
<sequence length="1493" mass="167805">MKQSYAMDNPIVFFLLESNYFPMFSIFFNLLLLLVMFGSCVYKKRLGWENSDAFTNERFKDMSLTYNKLVVICCETLSALNSVLLLLSCFNLHKNGWDRSELMILLDLLFTALSWGAISFYIRSQFTYSHDQKFPILLRVWWVLYFMFSCYRLLVDIALYKKQELVSVHLLLSDVLAVSVGLFLCYSCLQKQGQGERINLLLEEPLLNGAESSAATSVQLDKAEDDEVVTPFSNAGFLSHVSFSWMSPLIVLGNEKIIDSEDVPQVDNSDRAEKLFWIFRSKLEWDDGERRITTYKLIKALFFSVWRDILLSTLFAFVYTVSCYVAPYLMDTFVQYLNGQRQYSNQGVVLVTTFFVAKLVECQARRNWYFRLQKAGIGMRSVLVSMIYEKGLTLPCYSKQGHTSGEIINLMTVDAERISAFSWYMHDPWILVLQISLALLILYRSLGLGSIAAFAATFLVMLGNIPLAKLEEKFQGNLMESKDNRMKKTSEALLNMRILKLQGWEMKFLHKILDLRGIEAGWLKKFVYNSAAISSVLWAAPSFVSATAFGACMLLKIPLESGKIIAALATFRILQTPIYKLPDTISMIVQTKVSLDRIATFLCLDDLQQDGMERLPSGSSKMDVEVSNGAFSWDDSSPIPTLKDIRFKIPHGMNIAICGTVGSGKSSLLSSILGEVPKISGNLKVCGRKAYIAQSPWIQSGKVEENILFGKPMQREWYQRVLEACSLNKDLEVFPFRDQTVIGERGINLSGGQKQRIQIARALYQDADIYLFDDPFSAVDAHTGSHLFKEVLLGLLRNKTVIYVTHQLEFLPEADLILVMKDGRITQAGKYNEILESGTDFMELVGAHTDALAAVDSYEKGSASAQSTTSKESKVSNDEEKQEEDLPSPKGQLVQEEEREKGKVGFTVYQKYMKLAYGGALVPIILVVQILFQVLNIGSNYWMAWVTPVSKDVKPLVSGSTLILVYVFLATASSFCILVRAMLSAMTGFKIATELFNQMHFRIFRASMSFFDATPIGRILNRASTDQSAVDLRLPSQFSNLAIAAVNILGIIGVMGQVAWQVLIVFIPVIAACTWYRQYYISAARELARLSGISRSPLVQHFSETLSGITTIRSFDQEPRFRTDIMRLNDCYSRLRFHAISAMEWLCFRLDLLSTVAFALSLVILVSVPEGVINPSFAGLAVTYALNLNSLQATLIWTLCDLENKMISVERMLQYIDIPSEPSLVIESTRPEKSWPCRGEITICNLQVRYGPHLPMVLRGLTCTFRGGLKTGIVGRTGCGKSTLIQTLFRIVEPAAGEIRIDGINILTIGLHDLRSRLSIIPQEPTMFEGTVRSNLDPLEEYADDQIWEALDKCQLGDEIRKKELKLDSPVSENGQNWSVGQRQLVCLGRVLLKRSKVLILDEATASVDTATDTLIQETLRQHFSGCTVITIAHRISSVIDSDMVLLLDQGLIEEHDSPARLLEDKSSSFSKLVAEYTASSDSRFKRSSMKTN</sequence>